<feature type="chain" id="PRO_0000122276" description="Small ribosomal subunit protein eS8">
    <location>
        <begin position="1"/>
        <end position="127"/>
    </location>
</feature>
<evidence type="ECO:0000255" key="1">
    <source>
        <dbReference type="HAMAP-Rule" id="MF_00029"/>
    </source>
</evidence>
<evidence type="ECO:0000269" key="2">
    <source>
    </source>
</evidence>
<evidence type="ECO:0007744" key="3">
    <source>
        <dbReference type="PDB" id="4V6U"/>
    </source>
</evidence>
<reference key="1">
    <citation type="journal article" date="1999" name="Genetics">
        <title>Divergence of the hyperthermophilic archaea Pyrococcus furiosus and P. horikoshii inferred from complete genomic sequences.</title>
        <authorList>
            <person name="Maeder D.L."/>
            <person name="Weiss R.B."/>
            <person name="Dunn D.M."/>
            <person name="Cherry J.L."/>
            <person name="Gonzalez J.M."/>
            <person name="DiRuggiero J."/>
            <person name="Robb F.T."/>
        </authorList>
    </citation>
    <scope>NUCLEOTIDE SEQUENCE [LARGE SCALE GENOMIC DNA]</scope>
    <source>
        <strain>ATCC 43587 / DSM 3638 / JCM 8422 / Vc1</strain>
    </source>
</reference>
<reference evidence="3" key="2">
    <citation type="journal article" date="2013" name="Nucleic Acids Res.">
        <title>Promiscuous behaviour of archaeal ribosomal proteins: implications for eukaryotic ribosome evolution.</title>
        <authorList>
            <person name="Armache J.P."/>
            <person name="Anger A.M."/>
            <person name="Marquez V."/>
            <person name="Franckenberg S."/>
            <person name="Frohlich T."/>
            <person name="Villa E."/>
            <person name="Berninghausen O."/>
            <person name="Thomm M."/>
            <person name="Arnold G.J."/>
            <person name="Beckmann R."/>
            <person name="Wilson D.N."/>
        </authorList>
    </citation>
    <scope>STRUCTURE BY ELECTRON MICROSCOPY (6.60 ANGSTROMS) IN THE 70S RIBOSOME</scope>
    <scope>SUBUNIT</scope>
</reference>
<name>RS8E_PYRFU</name>
<sequence>MAIWQGRSLKKPSGGRIVLARKKRKRELGREPSNTRVAEQDKRKIIRTYGGNRKVRLTAAAYANVFDKSGKGRKVRIIRVIENPANRQFARRNIITKGAIIETEIGKAKVTSRPGQDGVVNAILLEE</sequence>
<keyword id="KW-0002">3D-structure</keyword>
<keyword id="KW-1185">Reference proteome</keyword>
<keyword id="KW-0687">Ribonucleoprotein</keyword>
<keyword id="KW-0689">Ribosomal protein</keyword>
<organism>
    <name type="scientific">Pyrococcus furiosus (strain ATCC 43587 / DSM 3638 / JCM 8422 / Vc1)</name>
    <dbReference type="NCBI Taxonomy" id="186497"/>
    <lineage>
        <taxon>Archaea</taxon>
        <taxon>Methanobacteriati</taxon>
        <taxon>Methanobacteriota</taxon>
        <taxon>Thermococci</taxon>
        <taxon>Thermococcales</taxon>
        <taxon>Thermococcaceae</taxon>
        <taxon>Pyrococcus</taxon>
    </lineage>
</organism>
<accession>Q8U1Y5</accession>
<protein>
    <recommendedName>
        <fullName evidence="1">Small ribosomal subunit protein eS8</fullName>
    </recommendedName>
    <alternativeName>
        <fullName>30S ribosomal protein S8e</fullName>
    </alternativeName>
</protein>
<comment type="subunit">
    <text evidence="1 2">Part of the 30S ribosomal subunit.</text>
</comment>
<comment type="similarity">
    <text evidence="1">Belongs to the eukaryotic ribosomal protein eS8 family.</text>
</comment>
<gene>
    <name evidence="1" type="primary">rps8e</name>
    <name type="ordered locus">PF1069</name>
</gene>
<proteinExistence type="evidence at protein level"/>
<dbReference type="EMBL" id="AE009950">
    <property type="protein sequence ID" value="AAL81193.1"/>
    <property type="molecule type" value="Genomic_DNA"/>
</dbReference>
<dbReference type="RefSeq" id="WP_011012206.1">
    <property type="nucleotide sequence ID" value="NZ_CP023154.1"/>
</dbReference>
<dbReference type="PDB" id="4V4N">
    <property type="method" value="EM"/>
    <property type="resolution" value="9.00 A"/>
    <property type="chains" value="J=1-127"/>
</dbReference>
<dbReference type="PDB" id="4V6U">
    <property type="method" value="EM"/>
    <property type="resolution" value="6.60 A"/>
    <property type="chains" value="AJ=1-127"/>
</dbReference>
<dbReference type="PDB" id="5JB3">
    <property type="method" value="EM"/>
    <property type="resolution" value="5.34 A"/>
    <property type="chains" value="J=1-127"/>
</dbReference>
<dbReference type="PDB" id="5JBH">
    <property type="method" value="EM"/>
    <property type="resolution" value="5.34 A"/>
    <property type="chains" value="J=1-127"/>
</dbReference>
<dbReference type="PDBsum" id="4V4N"/>
<dbReference type="PDBsum" id="4V6U"/>
<dbReference type="PDBsum" id="5JB3"/>
<dbReference type="PDBsum" id="5JBH"/>
<dbReference type="EMDB" id="EMD-50611"/>
<dbReference type="EMDB" id="EMD-50612"/>
<dbReference type="EMDB" id="EMD-50613"/>
<dbReference type="EMDB" id="EMD-8149"/>
<dbReference type="SMR" id="Q8U1Y5"/>
<dbReference type="STRING" id="186497.PF1069"/>
<dbReference type="PaxDb" id="186497-PF1069"/>
<dbReference type="KEGG" id="pfu:PF1069"/>
<dbReference type="PATRIC" id="fig|186497.12.peg.1129"/>
<dbReference type="eggNOG" id="arCOG04154">
    <property type="taxonomic scope" value="Archaea"/>
</dbReference>
<dbReference type="HOGENOM" id="CLU_080597_2_1_2"/>
<dbReference type="OrthoDB" id="372305at2157"/>
<dbReference type="PhylomeDB" id="Q8U1Y5"/>
<dbReference type="Proteomes" id="UP000001013">
    <property type="component" value="Chromosome"/>
</dbReference>
<dbReference type="GO" id="GO:1990904">
    <property type="term" value="C:ribonucleoprotein complex"/>
    <property type="evidence" value="ECO:0007669"/>
    <property type="project" value="UniProtKB-KW"/>
</dbReference>
<dbReference type="GO" id="GO:0005840">
    <property type="term" value="C:ribosome"/>
    <property type="evidence" value="ECO:0007669"/>
    <property type="project" value="UniProtKB-KW"/>
</dbReference>
<dbReference type="GO" id="GO:0003735">
    <property type="term" value="F:structural constituent of ribosome"/>
    <property type="evidence" value="ECO:0007669"/>
    <property type="project" value="InterPro"/>
</dbReference>
<dbReference type="GO" id="GO:0006412">
    <property type="term" value="P:translation"/>
    <property type="evidence" value="ECO:0007669"/>
    <property type="project" value="UniProtKB-UniRule"/>
</dbReference>
<dbReference type="CDD" id="cd11382">
    <property type="entry name" value="Ribosomal_S8e"/>
    <property type="match status" value="1"/>
</dbReference>
<dbReference type="FunFam" id="2.40.10.310:FF:000002">
    <property type="entry name" value="30S ribosomal protein S8e"/>
    <property type="match status" value="1"/>
</dbReference>
<dbReference type="Gene3D" id="2.40.10.310">
    <property type="match status" value="1"/>
</dbReference>
<dbReference type="HAMAP" id="MF_00029">
    <property type="entry name" value="Ribosomal_eS8"/>
    <property type="match status" value="1"/>
</dbReference>
<dbReference type="InterPro" id="IPR001047">
    <property type="entry name" value="Ribosomal_eS8"/>
</dbReference>
<dbReference type="InterPro" id="IPR018283">
    <property type="entry name" value="Ribosomal_eS8_CS"/>
</dbReference>
<dbReference type="InterPro" id="IPR020919">
    <property type="entry name" value="Ribosomal_protein_eS8_arc"/>
</dbReference>
<dbReference type="InterPro" id="IPR022309">
    <property type="entry name" value="Ribosomal_Se8/biogenesis_NSA2"/>
</dbReference>
<dbReference type="NCBIfam" id="TIGR00307">
    <property type="entry name" value="eS8"/>
    <property type="match status" value="1"/>
</dbReference>
<dbReference type="PANTHER" id="PTHR10394">
    <property type="entry name" value="40S RIBOSOMAL PROTEIN S8"/>
    <property type="match status" value="1"/>
</dbReference>
<dbReference type="Pfam" id="PF01201">
    <property type="entry name" value="Ribosomal_S8e"/>
    <property type="match status" value="1"/>
</dbReference>
<dbReference type="PROSITE" id="PS01193">
    <property type="entry name" value="RIBOSOMAL_S8E"/>
    <property type="match status" value="1"/>
</dbReference>